<accession>Q48KH5</accession>
<protein>
    <recommendedName>
        <fullName evidence="2">Transaldolase</fullName>
        <ecNumber evidence="2">2.2.1.2</ecNumber>
    </recommendedName>
</protein>
<gene>
    <name evidence="2" type="primary">tal</name>
    <name type="ordered locus">PSPPH_1869</name>
</gene>
<comment type="function">
    <text evidence="2">Transaldolase is important for the balance of metabolites in the pentose-phosphate pathway.</text>
</comment>
<comment type="catalytic activity">
    <reaction evidence="2">
        <text>D-sedoheptulose 7-phosphate + D-glyceraldehyde 3-phosphate = D-erythrose 4-phosphate + beta-D-fructose 6-phosphate</text>
        <dbReference type="Rhea" id="RHEA:17053"/>
        <dbReference type="ChEBI" id="CHEBI:16897"/>
        <dbReference type="ChEBI" id="CHEBI:57483"/>
        <dbReference type="ChEBI" id="CHEBI:57634"/>
        <dbReference type="ChEBI" id="CHEBI:59776"/>
        <dbReference type="EC" id="2.2.1.2"/>
    </reaction>
</comment>
<comment type="pathway">
    <text evidence="2">Carbohydrate degradation; pentose phosphate pathway; D-glyceraldehyde 3-phosphate and beta-D-fructose 6-phosphate from D-ribose 5-phosphate and D-xylulose 5-phosphate (non-oxidative stage): step 2/3.</text>
</comment>
<comment type="subunit">
    <text evidence="1">Homodimer.</text>
</comment>
<comment type="subcellular location">
    <subcellularLocation>
        <location evidence="2">Cytoplasm</location>
    </subcellularLocation>
</comment>
<comment type="similarity">
    <text evidence="2">Belongs to the transaldolase family. Type 1 subfamily.</text>
</comment>
<evidence type="ECO:0000250" key="1"/>
<evidence type="ECO:0000255" key="2">
    <source>
        <dbReference type="HAMAP-Rule" id="MF_00492"/>
    </source>
</evidence>
<organism>
    <name type="scientific">Pseudomonas savastanoi pv. phaseolicola (strain 1448A / Race 6)</name>
    <name type="common">Pseudomonas syringae pv. phaseolicola (strain 1448A / Race 6)</name>
    <dbReference type="NCBI Taxonomy" id="264730"/>
    <lineage>
        <taxon>Bacteria</taxon>
        <taxon>Pseudomonadati</taxon>
        <taxon>Pseudomonadota</taxon>
        <taxon>Gammaproteobacteria</taxon>
        <taxon>Pseudomonadales</taxon>
        <taxon>Pseudomonadaceae</taxon>
        <taxon>Pseudomonas</taxon>
    </lineage>
</organism>
<sequence>MTSKLDQLKKFTTVVADTGDFGAIKSLEPEDATTNPSLLLKAASDVNNAQMLADAFSGAKGDIGLACDRFAVAIGQEILKVVPGRVSTEVDARLSFDTNALIERSERLIGLYDAAGIKRDRVLIKLAATWEGIRAAEKLEKDGIQTNLTLLFSFAQAIACAEAGVFLISPFVGRIYDWYKKSSGTDYVGAEDPGVQSVTRIYNYYKANDFKTVVMGASFRNLNQIEQLAGCDRLTISTDLLKKLAEDTGTLERKLAPGNAGEARQSLTESQFRWASNEDAMATEKLAEGIRQFARDQEKLEALLSAKA</sequence>
<keyword id="KW-0963">Cytoplasm</keyword>
<keyword id="KW-0570">Pentose shunt</keyword>
<keyword id="KW-0704">Schiff base</keyword>
<keyword id="KW-0808">Transferase</keyword>
<name>TAL_PSE14</name>
<proteinExistence type="inferred from homology"/>
<reference key="1">
    <citation type="journal article" date="2005" name="J. Bacteriol.">
        <title>Whole-genome sequence analysis of Pseudomonas syringae pv. phaseolicola 1448A reveals divergence among pathovars in genes involved in virulence and transposition.</title>
        <authorList>
            <person name="Joardar V."/>
            <person name="Lindeberg M."/>
            <person name="Jackson R.W."/>
            <person name="Selengut J."/>
            <person name="Dodson R."/>
            <person name="Brinkac L.M."/>
            <person name="Daugherty S.C."/>
            <person name="DeBoy R.T."/>
            <person name="Durkin A.S."/>
            <person name="Gwinn Giglio M."/>
            <person name="Madupu R."/>
            <person name="Nelson W.C."/>
            <person name="Rosovitz M.J."/>
            <person name="Sullivan S.A."/>
            <person name="Crabtree J."/>
            <person name="Creasy T."/>
            <person name="Davidsen T.M."/>
            <person name="Haft D.H."/>
            <person name="Zafar N."/>
            <person name="Zhou L."/>
            <person name="Halpin R."/>
            <person name="Holley T."/>
            <person name="Khouri H.M."/>
            <person name="Feldblyum T.V."/>
            <person name="White O."/>
            <person name="Fraser C.M."/>
            <person name="Chatterjee A.K."/>
            <person name="Cartinhour S."/>
            <person name="Schneider D."/>
            <person name="Mansfield J.W."/>
            <person name="Collmer A."/>
            <person name="Buell R."/>
        </authorList>
    </citation>
    <scope>NUCLEOTIDE SEQUENCE [LARGE SCALE GENOMIC DNA]</scope>
    <source>
        <strain>1448A / Race 6</strain>
    </source>
</reference>
<feature type="chain" id="PRO_0000230963" description="Transaldolase">
    <location>
        <begin position="1"/>
        <end position="308"/>
    </location>
</feature>
<feature type="active site" description="Schiff-base intermediate with substrate" evidence="2">
    <location>
        <position position="125"/>
    </location>
</feature>
<dbReference type="EC" id="2.2.1.2" evidence="2"/>
<dbReference type="EMBL" id="CP000058">
    <property type="protein sequence ID" value="AAZ33110.1"/>
    <property type="molecule type" value="Genomic_DNA"/>
</dbReference>
<dbReference type="RefSeq" id="WP_004659848.1">
    <property type="nucleotide sequence ID" value="NC_005773.3"/>
</dbReference>
<dbReference type="SMR" id="Q48KH5"/>
<dbReference type="GeneID" id="69858835"/>
<dbReference type="KEGG" id="psp:PSPPH_1869"/>
<dbReference type="eggNOG" id="COG0176">
    <property type="taxonomic scope" value="Bacteria"/>
</dbReference>
<dbReference type="HOGENOM" id="CLU_047470_0_1_6"/>
<dbReference type="UniPathway" id="UPA00115">
    <property type="reaction ID" value="UER00414"/>
</dbReference>
<dbReference type="Proteomes" id="UP000000551">
    <property type="component" value="Chromosome"/>
</dbReference>
<dbReference type="GO" id="GO:0005829">
    <property type="term" value="C:cytosol"/>
    <property type="evidence" value="ECO:0007669"/>
    <property type="project" value="TreeGrafter"/>
</dbReference>
<dbReference type="GO" id="GO:0004801">
    <property type="term" value="F:transaldolase activity"/>
    <property type="evidence" value="ECO:0000250"/>
    <property type="project" value="UniProtKB"/>
</dbReference>
<dbReference type="GO" id="GO:0005975">
    <property type="term" value="P:carbohydrate metabolic process"/>
    <property type="evidence" value="ECO:0007669"/>
    <property type="project" value="InterPro"/>
</dbReference>
<dbReference type="GO" id="GO:0006098">
    <property type="term" value="P:pentose-phosphate shunt"/>
    <property type="evidence" value="ECO:0007669"/>
    <property type="project" value="UniProtKB-UniRule"/>
</dbReference>
<dbReference type="CDD" id="cd00957">
    <property type="entry name" value="Transaldolase_TalAB"/>
    <property type="match status" value="1"/>
</dbReference>
<dbReference type="FunFam" id="3.20.20.70:FF:000002">
    <property type="entry name" value="Transaldolase"/>
    <property type="match status" value="1"/>
</dbReference>
<dbReference type="Gene3D" id="3.20.20.70">
    <property type="entry name" value="Aldolase class I"/>
    <property type="match status" value="1"/>
</dbReference>
<dbReference type="HAMAP" id="MF_00492">
    <property type="entry name" value="Transaldolase_1"/>
    <property type="match status" value="1"/>
</dbReference>
<dbReference type="InterPro" id="IPR013785">
    <property type="entry name" value="Aldolase_TIM"/>
</dbReference>
<dbReference type="InterPro" id="IPR001585">
    <property type="entry name" value="TAL/FSA"/>
</dbReference>
<dbReference type="InterPro" id="IPR004730">
    <property type="entry name" value="Transaldolase_1"/>
</dbReference>
<dbReference type="InterPro" id="IPR018225">
    <property type="entry name" value="Transaldolase_AS"/>
</dbReference>
<dbReference type="NCBIfam" id="NF009001">
    <property type="entry name" value="PRK12346.1"/>
    <property type="match status" value="1"/>
</dbReference>
<dbReference type="NCBIfam" id="TIGR00874">
    <property type="entry name" value="talAB"/>
    <property type="match status" value="1"/>
</dbReference>
<dbReference type="PANTHER" id="PTHR10683">
    <property type="entry name" value="TRANSALDOLASE"/>
    <property type="match status" value="1"/>
</dbReference>
<dbReference type="PANTHER" id="PTHR10683:SF18">
    <property type="entry name" value="TRANSALDOLASE"/>
    <property type="match status" value="1"/>
</dbReference>
<dbReference type="Pfam" id="PF00923">
    <property type="entry name" value="TAL_FSA"/>
    <property type="match status" value="1"/>
</dbReference>
<dbReference type="SUPFAM" id="SSF51569">
    <property type="entry name" value="Aldolase"/>
    <property type="match status" value="1"/>
</dbReference>
<dbReference type="PROSITE" id="PS01054">
    <property type="entry name" value="TRANSALDOLASE_1"/>
    <property type="match status" value="1"/>
</dbReference>
<dbReference type="PROSITE" id="PS00958">
    <property type="entry name" value="TRANSALDOLASE_2"/>
    <property type="match status" value="1"/>
</dbReference>